<name>ATG5_PICAN</name>
<proteinExistence type="inferred from homology"/>
<comment type="function">
    <text evidence="1 2">Involved in cytoplasm to vacuole transport (Cvt) and autophagic vesicle formation. Autophagy is essential for maintenance of amino acid levels and protein synthesis under nitrogen starvation. Required for selective autophagic degradation of the nucleus (nucleophagy). Also required for mitophagy, which eliminates defective or superfluous mitochondria in order to fulfill cellular energy requirements and prevent excess ROS production. Conjugation with ATG12, through a ubiquitin-like conjugating system involving ATG7 as an E1-like activating enzyme and ATG10 as an E2-like conjugating enzyme, is essential for its function. The ATG12-ATG5 conjugate acts as an E3-like enzyme which is required for lipidation of ATG8 and ATG8 association to the vesicle membranes (By similarity).</text>
</comment>
<comment type="subunit">
    <text evidence="1">Conjugated with ATG12.</text>
</comment>
<comment type="subcellular location">
    <subcellularLocation>
        <location evidence="1">Preautophagosomal structure membrane</location>
        <topology evidence="1">Peripheral membrane protein</topology>
    </subcellularLocation>
</comment>
<comment type="PTM">
    <text evidence="1">Conjugated to ATG12; which is essential for autophagy.</text>
</comment>
<comment type="similarity">
    <text evidence="3">Belongs to the ATG5 family.</text>
</comment>
<reference key="1">
    <citation type="journal article" date="2007" name="Autophagy">
        <title>ATG genes involved in non-selective autophagy are conserved from yeast to man, but the selective Cvt and pexophagy pathways also require organism-specific genes.</title>
        <authorList>
            <person name="Meijer W.H."/>
            <person name="van der Klei I.J."/>
            <person name="Veenhuis M."/>
            <person name="Kiel J.A.K.W."/>
        </authorList>
    </citation>
    <scope>NUCLEOTIDE SEQUENCE [GENOMIC DNA]</scope>
    <scope>FUNCTION</scope>
    <source>
        <strain>ATCC 34438 / CBS 4732 / DSM 70277 / JCM 3621 / NBRC 1476 / NRRL Y-5445</strain>
    </source>
</reference>
<keyword id="KW-0072">Autophagy</keyword>
<keyword id="KW-1017">Isopeptide bond</keyword>
<keyword id="KW-0472">Membrane</keyword>
<keyword id="KW-0653">Protein transport</keyword>
<keyword id="KW-0813">Transport</keyword>
<keyword id="KW-0832">Ubl conjugation</keyword>
<sequence length="277" mass="32128">MSTSEIISRVWGGVLYMQFHLDRALSNQECPSFYVAVHRNSYLHNSLPAILQFFKPFLKDARLAQSQKWWFEFEKVPLKWNFPVGLLYDLVTTDAQVEKQMWEITLKYYDYPIEYVIPIDQNPSFLKDHWTNQLKEACFILNGSSKLVMNMSRTDSDDFYHAAIHKDSTQFESMFRKLLPSSVSSLKNLPIKVYLPLSNKLIQPVLSNLGRKITLGNLLQDLIPDLFPSSLMYTVAHPYSHGVVLPLDSSIIDLYICMKSLDGFLHISIKMIQKNEH</sequence>
<accession>A7KAI4</accession>
<organism>
    <name type="scientific">Pichia angusta</name>
    <name type="common">Yeast</name>
    <name type="synonym">Hansenula polymorpha</name>
    <dbReference type="NCBI Taxonomy" id="870730"/>
    <lineage>
        <taxon>Eukaryota</taxon>
        <taxon>Fungi</taxon>
        <taxon>Dikarya</taxon>
        <taxon>Ascomycota</taxon>
        <taxon>Saccharomycotina</taxon>
        <taxon>Pichiomycetes</taxon>
        <taxon>Pichiales</taxon>
        <taxon>Pichiaceae</taxon>
        <taxon>Ogataea</taxon>
    </lineage>
</organism>
<protein>
    <recommendedName>
        <fullName>Autophagy protein 5</fullName>
    </recommendedName>
</protein>
<evidence type="ECO:0000250" key="1"/>
<evidence type="ECO:0000269" key="2">
    <source>
    </source>
</evidence>
<evidence type="ECO:0000305" key="3"/>
<feature type="chain" id="PRO_0000317859" description="Autophagy protein 5">
    <location>
        <begin position="1"/>
        <end position="277"/>
    </location>
</feature>
<feature type="cross-link" description="Glycyl lysine isopeptide (Lys-Gly) (interchain with G-Cter in ATG12)" evidence="1">
    <location>
        <position position="135"/>
    </location>
</feature>
<dbReference type="EMBL" id="EF102885">
    <property type="protein sequence ID" value="ABO31289.1"/>
    <property type="molecule type" value="Genomic_DNA"/>
</dbReference>
<dbReference type="SMR" id="A7KAI4"/>
<dbReference type="GO" id="GO:0034274">
    <property type="term" value="C:Atg12-Atg5-Atg16 complex"/>
    <property type="evidence" value="ECO:0007669"/>
    <property type="project" value="TreeGrafter"/>
</dbReference>
<dbReference type="GO" id="GO:0005776">
    <property type="term" value="C:autophagosome"/>
    <property type="evidence" value="ECO:0007669"/>
    <property type="project" value="TreeGrafter"/>
</dbReference>
<dbReference type="GO" id="GO:0044233">
    <property type="term" value="C:mitochondria-associated endoplasmic reticulum membrane contact site"/>
    <property type="evidence" value="ECO:0007669"/>
    <property type="project" value="TreeGrafter"/>
</dbReference>
<dbReference type="GO" id="GO:0061908">
    <property type="term" value="C:phagophore"/>
    <property type="evidence" value="ECO:0007669"/>
    <property type="project" value="TreeGrafter"/>
</dbReference>
<dbReference type="GO" id="GO:0034045">
    <property type="term" value="C:phagophore assembly site membrane"/>
    <property type="evidence" value="ECO:0007669"/>
    <property type="project" value="UniProtKB-SubCell"/>
</dbReference>
<dbReference type="GO" id="GO:0019776">
    <property type="term" value="F:Atg8-family ligase activity"/>
    <property type="evidence" value="ECO:0007669"/>
    <property type="project" value="TreeGrafter"/>
</dbReference>
<dbReference type="GO" id="GO:0000422">
    <property type="term" value="P:autophagy of mitochondrion"/>
    <property type="evidence" value="ECO:0007669"/>
    <property type="project" value="TreeGrafter"/>
</dbReference>
<dbReference type="GO" id="GO:0006995">
    <property type="term" value="P:cellular response to nitrogen starvation"/>
    <property type="evidence" value="ECO:0007669"/>
    <property type="project" value="TreeGrafter"/>
</dbReference>
<dbReference type="GO" id="GO:0034727">
    <property type="term" value="P:piecemeal microautophagy of the nucleus"/>
    <property type="evidence" value="ECO:0007669"/>
    <property type="project" value="TreeGrafter"/>
</dbReference>
<dbReference type="GO" id="GO:0015031">
    <property type="term" value="P:protein transport"/>
    <property type="evidence" value="ECO:0007669"/>
    <property type="project" value="UniProtKB-KW"/>
</dbReference>
<dbReference type="Gene3D" id="3.10.20.620">
    <property type="match status" value="1"/>
</dbReference>
<dbReference type="Gene3D" id="1.10.246.190">
    <property type="entry name" value="Autophagy protein Apg5, helix rich domain"/>
    <property type="match status" value="1"/>
</dbReference>
<dbReference type="Gene3D" id="3.10.20.90">
    <property type="entry name" value="Phosphatidylinositol 3-kinase Catalytic Subunit, Chain A, domain 1"/>
    <property type="match status" value="1"/>
</dbReference>
<dbReference type="InterPro" id="IPR007239">
    <property type="entry name" value="Atg5"/>
</dbReference>
<dbReference type="InterPro" id="IPR048940">
    <property type="entry name" value="ATG5_HBR"/>
</dbReference>
<dbReference type="InterPro" id="IPR042526">
    <property type="entry name" value="Atg5_HR"/>
</dbReference>
<dbReference type="InterPro" id="IPR048939">
    <property type="entry name" value="ATG5_UblA"/>
</dbReference>
<dbReference type="InterPro" id="IPR042527">
    <property type="entry name" value="Atg5_UblA_dom_sf"/>
</dbReference>
<dbReference type="InterPro" id="IPR048318">
    <property type="entry name" value="ATG5_UblB"/>
</dbReference>
<dbReference type="PANTHER" id="PTHR13040">
    <property type="entry name" value="AUTOPHAGY PROTEIN 5"/>
    <property type="match status" value="1"/>
</dbReference>
<dbReference type="PANTHER" id="PTHR13040:SF2">
    <property type="entry name" value="AUTOPHAGY PROTEIN 5"/>
    <property type="match status" value="1"/>
</dbReference>
<dbReference type="Pfam" id="PF20637">
    <property type="entry name" value="ATG5_HBR"/>
    <property type="match status" value="1"/>
</dbReference>
<dbReference type="Pfam" id="PF20638">
    <property type="entry name" value="ATG5_UblA"/>
    <property type="match status" value="1"/>
</dbReference>
<dbReference type="Pfam" id="PF04106">
    <property type="entry name" value="ATG5_UblB"/>
    <property type="match status" value="1"/>
</dbReference>
<gene>
    <name type="primary">ATG5</name>
</gene>